<dbReference type="EC" id="1.13.11.4" evidence="3"/>
<dbReference type="EMBL" id="AB112586">
    <property type="protein sequence ID" value="BAC78375.1"/>
    <property type="molecule type" value="Genomic_DNA"/>
</dbReference>
<dbReference type="SMR" id="Q7X284"/>
<dbReference type="KEGG" id="ag:BAC78375"/>
<dbReference type="BioCyc" id="MetaCyc:MONOMER-15921"/>
<dbReference type="GO" id="GO:0047922">
    <property type="term" value="F:gentisate 1,2-dioxygenase activity"/>
    <property type="evidence" value="ECO:0000315"/>
    <property type="project" value="UniProtKB"/>
</dbReference>
<dbReference type="GO" id="GO:0009056">
    <property type="term" value="P:catabolic process"/>
    <property type="evidence" value="ECO:0007669"/>
    <property type="project" value="UniProtKB-KW"/>
</dbReference>
<dbReference type="CDD" id="cd06992">
    <property type="entry name" value="cupin_GDO-like_C"/>
    <property type="match status" value="1"/>
</dbReference>
<dbReference type="CDD" id="cd02216">
    <property type="entry name" value="cupin_GDO-like_N"/>
    <property type="match status" value="1"/>
</dbReference>
<dbReference type="FunFam" id="2.60.120.10:FF:000274">
    <property type="entry name" value="Gentisate 1,2-dioxygenase"/>
    <property type="match status" value="1"/>
</dbReference>
<dbReference type="Gene3D" id="2.60.120.10">
    <property type="entry name" value="Jelly Rolls"/>
    <property type="match status" value="1"/>
</dbReference>
<dbReference type="InterPro" id="IPR013096">
    <property type="entry name" value="Cupin_2"/>
</dbReference>
<dbReference type="InterPro" id="IPR047183">
    <property type="entry name" value="GDO-like"/>
</dbReference>
<dbReference type="InterPro" id="IPR014710">
    <property type="entry name" value="RmlC-like_jellyroll"/>
</dbReference>
<dbReference type="InterPro" id="IPR011051">
    <property type="entry name" value="RmlC_Cupin_sf"/>
</dbReference>
<dbReference type="PANTHER" id="PTHR41517">
    <property type="entry name" value="1,2-DIOXYGENASE PROTEIN-RELATED"/>
    <property type="match status" value="1"/>
</dbReference>
<dbReference type="PANTHER" id="PTHR41517:SF1">
    <property type="entry name" value="CUPIN"/>
    <property type="match status" value="1"/>
</dbReference>
<dbReference type="Pfam" id="PF07883">
    <property type="entry name" value="Cupin_2"/>
    <property type="match status" value="1"/>
</dbReference>
<dbReference type="SUPFAM" id="SSF51182">
    <property type="entry name" value="RmlC-like cupins"/>
    <property type="match status" value="1"/>
</dbReference>
<comment type="function">
    <text evidence="3">Involved in the degradation of salicylate via a pathway involving coenzyme A derivative. Catalyzes the oxygen-dependent ring fission of gentisate between the carboxyl and proximal hydroxyl groups at positions 1 and 2 of the aromatic ring to form maleylpyruvate. The substrate specificity is strong, since salicylate, catechol, protocatechuic acid, homogenetisate, 2,3-dihydroxybenzoate or 5-aminosalicylate cannot substitute for gentisate in the ring cleavage reaction.</text>
</comment>
<comment type="catalytic activity">
    <reaction evidence="3">
        <text>2,5-dihydroxybenzoate + O2 = 3-maleylpyruvate + H(+)</text>
        <dbReference type="Rhea" id="RHEA:18237"/>
        <dbReference type="ChEBI" id="CHEBI:15378"/>
        <dbReference type="ChEBI" id="CHEBI:15379"/>
        <dbReference type="ChEBI" id="CHEBI:16727"/>
        <dbReference type="ChEBI" id="CHEBI:58044"/>
        <dbReference type="EC" id="1.13.11.4"/>
    </reaction>
</comment>
<comment type="induction">
    <text evidence="3">By salicylate.</text>
</comment>
<comment type="disruption phenotype">
    <text evidence="3">Cells lacking this gene accumulate gentisate.</text>
</comment>
<comment type="similarity">
    <text evidence="5">Belongs to the gentisate 1,2-dioxygenase family.</text>
</comment>
<proteinExistence type="evidence at protein level"/>
<feature type="chain" id="PRO_0000435738" description="Gentisate 1,2-dioxygenase">
    <location>
        <begin position="1"/>
        <end position="358"/>
    </location>
</feature>
<feature type="domain" description="Cupin type-2" evidence="1">
    <location>
        <begin position="99"/>
        <end position="165"/>
    </location>
</feature>
<feature type="region of interest" description="Disordered" evidence="2">
    <location>
        <begin position="185"/>
        <end position="215"/>
    </location>
</feature>
<feature type="compositionally biased region" description="Basic and acidic residues" evidence="2">
    <location>
        <begin position="187"/>
        <end position="202"/>
    </location>
</feature>
<sequence length="358" mass="39720">MTDTTSEQTERKLLDELYADFEDAGLIPLWTQVDGLMPMSPQPAAVPHLWRWAELLPIAQRSGELVPVGRGGERRAMALSNPGFPGLPYATPTLWTAIQYLGPREVAPSHRHSQGAFRFVVEGEGVWTNVDGDAVAMRRGDLLLTPSWAFHEHQNVTDEPMAWLDGLDIPLVSKLDAGFFEFGPDELSTRETPERSRGERLWGHPGLRPIGRPDQPNSPLNAYRWEHTDAALTAQLELEQEGVPGVLEPGHAGVRFSNPTTGRDALVTMRTEMRRLRAGTRTAPVRTVGSAIWQVFEGEAVARVGDKVFEIAKGDLFVVPSWCEVSLSARTQVDLFRFSDEPVYEALGLARTSRGEHK</sequence>
<accession>Q7X284</accession>
<name>SDGD_STRSQ</name>
<keyword id="KW-0058">Aromatic hydrocarbons catabolism</keyword>
<keyword id="KW-0223">Dioxygenase</keyword>
<keyword id="KW-0560">Oxidoreductase</keyword>
<gene>
    <name evidence="4" type="primary">sdgD</name>
</gene>
<protein>
    <recommendedName>
        <fullName evidence="4">Gentisate 1,2-dioxygenase</fullName>
        <shortName evidence="4">GDO</shortName>
        <ecNumber evidence="3">1.13.11.4</ecNumber>
    </recommendedName>
</protein>
<evidence type="ECO:0000255" key="1"/>
<evidence type="ECO:0000256" key="2">
    <source>
        <dbReference type="SAM" id="MobiDB-lite"/>
    </source>
</evidence>
<evidence type="ECO:0000269" key="3">
    <source>
    </source>
</evidence>
<evidence type="ECO:0000303" key="4">
    <source>
    </source>
</evidence>
<evidence type="ECO:0000305" key="5"/>
<organism>
    <name type="scientific">Streptomyces sp</name>
    <dbReference type="NCBI Taxonomy" id="1931"/>
    <lineage>
        <taxon>Bacteria</taxon>
        <taxon>Bacillati</taxon>
        <taxon>Actinomycetota</taxon>
        <taxon>Actinomycetes</taxon>
        <taxon>Kitasatosporales</taxon>
        <taxon>Streptomycetaceae</taxon>
        <taxon>Streptomyces</taxon>
    </lineage>
</organism>
<reference key="1">
    <citation type="journal article" date="2004" name="Appl. Environ. Microbiol.">
        <title>Novel pathway of salicylate degradation by Streptomyces sp. strain WA46.</title>
        <authorList>
            <person name="Ishiyama D."/>
            <person name="Vujaklija D."/>
            <person name="Davies J."/>
        </authorList>
    </citation>
    <scope>NUCLEOTIDE SEQUENCE [GENOMIC DNA]</scope>
    <scope>FUNCTION</scope>
    <scope>CATALYTIC ACTIVITY</scope>
    <scope>DISRUPTION PHENOTYPE</scope>
    <scope>INDUCTION</scope>
    <scope>SUBSTRATE SPECIFICITY</scope>
    <source>
        <strain>WA46</strain>
    </source>
</reference>